<evidence type="ECO:0000250" key="1">
    <source>
        <dbReference type="UniProtKB" id="P05108"/>
    </source>
</evidence>
<evidence type="ECO:0000250" key="2">
    <source>
        <dbReference type="UniProtKB" id="P14137"/>
    </source>
</evidence>
<evidence type="ECO:0000256" key="3">
    <source>
        <dbReference type="SAM" id="MobiDB-lite"/>
    </source>
</evidence>
<evidence type="ECO:0000269" key="4">
    <source>
    </source>
</evidence>
<evidence type="ECO:0000303" key="5">
    <source>
    </source>
</evidence>
<evidence type="ECO:0000303" key="6">
    <source>
    </source>
</evidence>
<evidence type="ECO:0000305" key="7"/>
<comment type="function">
    <text evidence="1">A cytochrome P450 monooxygenase that catalyzes the side-chain hydroxylation and cleavage of cholesterol to pregnenolone, the precursor of most steroid hormones (By similarity). Catalyzes three sequential oxidation reactions of cholesterol, namely the hydroxylation at C22 followed with the hydroxylation at C20 to yield 20R,22R-hydroxycholesterol that is further cleaved between C20 and C22 to yield the C21-steroid pregnenolone and 4-methylpentanal (By similarity). Mechanistically, uses molecular oxygen inserting one oxygen atom into a substrate and reducing the second into a water molecule. Two electrons are provided by NADPH via a two-protein mitochondrial transfer system comprising flavoprotein FDXR (adrenodoxin/ferredoxin reductase) and nonheme iron-sulfur protein FDX1 or FDX2 (adrenodoxin/ferredoxin) (By similarity).</text>
</comment>
<comment type="catalytic activity">
    <reaction evidence="1">
        <text>6 reduced [adrenodoxin] + cholesterol + 3 O2 + 6 H(+) = 4-methylpentanal + pregnenolone + 6 oxidized [adrenodoxin] + 4 H2O</text>
        <dbReference type="Rhea" id="RHEA:35739"/>
        <dbReference type="Rhea" id="RHEA-COMP:9998"/>
        <dbReference type="Rhea" id="RHEA-COMP:9999"/>
        <dbReference type="ChEBI" id="CHEBI:15377"/>
        <dbReference type="ChEBI" id="CHEBI:15378"/>
        <dbReference type="ChEBI" id="CHEBI:15379"/>
        <dbReference type="ChEBI" id="CHEBI:16113"/>
        <dbReference type="ChEBI" id="CHEBI:16581"/>
        <dbReference type="ChEBI" id="CHEBI:17998"/>
        <dbReference type="ChEBI" id="CHEBI:33737"/>
        <dbReference type="ChEBI" id="CHEBI:33738"/>
        <dbReference type="EC" id="1.14.15.6"/>
    </reaction>
    <physiologicalReaction direction="left-to-right" evidence="1">
        <dbReference type="Rhea" id="RHEA:35740"/>
    </physiologicalReaction>
</comment>
<comment type="catalytic activity">
    <reaction evidence="1">
        <text>2 reduced [adrenodoxin] + cholesterol + O2 + 2 H(+) = (22R)-hydroxycholesterol + 2 oxidized [adrenodoxin] + H2O</text>
        <dbReference type="Rhea" id="RHEA:34335"/>
        <dbReference type="Rhea" id="RHEA-COMP:9998"/>
        <dbReference type="Rhea" id="RHEA-COMP:9999"/>
        <dbReference type="ChEBI" id="CHEBI:15377"/>
        <dbReference type="ChEBI" id="CHEBI:15378"/>
        <dbReference type="ChEBI" id="CHEBI:15379"/>
        <dbReference type="ChEBI" id="CHEBI:16113"/>
        <dbReference type="ChEBI" id="CHEBI:33737"/>
        <dbReference type="ChEBI" id="CHEBI:33738"/>
        <dbReference type="ChEBI" id="CHEBI:67237"/>
    </reaction>
    <physiologicalReaction direction="left-to-right" evidence="1">
        <dbReference type="Rhea" id="RHEA:34336"/>
    </physiologicalReaction>
</comment>
<comment type="catalytic activity">
    <reaction evidence="1">
        <text>(22R)-hydroxycholesterol + 2 reduced [adrenodoxin] + O2 + 2 H(+) = (20R,22R)-20,22-dihydroxycholesterol + 2 oxidized [adrenodoxin] + H2O</text>
        <dbReference type="Rhea" id="RHEA:34339"/>
        <dbReference type="Rhea" id="RHEA-COMP:9998"/>
        <dbReference type="Rhea" id="RHEA-COMP:9999"/>
        <dbReference type="ChEBI" id="CHEBI:1294"/>
        <dbReference type="ChEBI" id="CHEBI:15377"/>
        <dbReference type="ChEBI" id="CHEBI:15378"/>
        <dbReference type="ChEBI" id="CHEBI:15379"/>
        <dbReference type="ChEBI" id="CHEBI:33737"/>
        <dbReference type="ChEBI" id="CHEBI:33738"/>
        <dbReference type="ChEBI" id="CHEBI:67237"/>
    </reaction>
</comment>
<comment type="catalytic activity">
    <reaction evidence="1">
        <text>(20R,22R)-20,22-dihydroxycholesterol + 2 reduced [adrenodoxin] + O2 + 2 H(+) = 4-methylpentanal + pregnenolone + 2 oxidized [adrenodoxin] + 2 H2O</text>
        <dbReference type="Rhea" id="RHEA:34343"/>
        <dbReference type="Rhea" id="RHEA-COMP:9998"/>
        <dbReference type="Rhea" id="RHEA-COMP:9999"/>
        <dbReference type="ChEBI" id="CHEBI:1294"/>
        <dbReference type="ChEBI" id="CHEBI:15377"/>
        <dbReference type="ChEBI" id="CHEBI:15378"/>
        <dbReference type="ChEBI" id="CHEBI:15379"/>
        <dbReference type="ChEBI" id="CHEBI:16581"/>
        <dbReference type="ChEBI" id="CHEBI:17998"/>
        <dbReference type="ChEBI" id="CHEBI:33737"/>
        <dbReference type="ChEBI" id="CHEBI:33738"/>
    </reaction>
    <physiologicalReaction direction="left-to-right" evidence="1">
        <dbReference type="Rhea" id="RHEA:34344"/>
    </physiologicalReaction>
</comment>
<comment type="cofactor">
    <cofactor evidence="1">
        <name>heme</name>
        <dbReference type="ChEBI" id="CHEBI:30413"/>
    </cofactor>
</comment>
<comment type="pathway">
    <text evidence="1">Lipid metabolism; C21-steroid hormone metabolism.</text>
</comment>
<comment type="pathway">
    <text evidence="1">Steroid metabolism; cholesterol metabolism.</text>
</comment>
<comment type="subunit">
    <text evidence="1">Interacts with FDX1/adrenodoxin.</text>
</comment>
<comment type="subcellular location">
    <subcellularLocation>
        <location evidence="2">Mitochondrion inner membrane</location>
        <topology evidence="7">Peripheral membrane protein</topology>
    </subcellularLocation>
    <text evidence="2">Localizes to the matrix side of the mitochondrion inner membrane.</text>
</comment>
<comment type="similarity">
    <text evidence="7">Belongs to the cytochrome P450 family.</text>
</comment>
<accession>P79202</accession>
<feature type="transit peptide" description="Mitochondrion" evidence="4">
    <location>
        <begin position="1"/>
        <end position="39"/>
    </location>
</feature>
<feature type="chain" id="PRO_0000003591" description="Cholesterol side-chain cleavage enzyme, mitochondrial">
    <location>
        <begin position="40"/>
        <end position="520"/>
    </location>
</feature>
<feature type="region of interest" description="Disordered" evidence="3">
    <location>
        <begin position="27"/>
        <end position="47"/>
    </location>
</feature>
<feature type="binding site" description="axial binding residue" evidence="1">
    <location>
        <position position="461"/>
    </location>
    <ligand>
        <name>heme</name>
        <dbReference type="ChEBI" id="CHEBI:30413"/>
    </ligand>
    <ligandPart>
        <name>Fe</name>
        <dbReference type="ChEBI" id="CHEBI:18248"/>
    </ligandPart>
</feature>
<proteinExistence type="evidence at protein level"/>
<organism>
    <name type="scientific">Ovis aries</name>
    <name type="common">Sheep</name>
    <dbReference type="NCBI Taxonomy" id="9940"/>
    <lineage>
        <taxon>Eukaryota</taxon>
        <taxon>Metazoa</taxon>
        <taxon>Chordata</taxon>
        <taxon>Craniata</taxon>
        <taxon>Vertebrata</taxon>
        <taxon>Euteleostomi</taxon>
        <taxon>Mammalia</taxon>
        <taxon>Eutheria</taxon>
        <taxon>Laurasiatheria</taxon>
        <taxon>Artiodactyla</taxon>
        <taxon>Ruminantia</taxon>
        <taxon>Pecora</taxon>
        <taxon>Bovidae</taxon>
        <taxon>Caprinae</taxon>
        <taxon>Ovis</taxon>
    </lineage>
</organism>
<sequence length="520" mass="60357">MLARGLPFRSALVKACPPLLNTGREGWGHHRVGTGEGAGISTRTPRPYSEIPSPGDNGWINLYHFWRKKGSQRIHFHHIENFQKYGPIYREKLGNLESVYIIHPEGVAHLFKFEGSYPQRYDIPPWLAYHRYYQKPIGVLFKKSGAWKKDRVVLNTEVMAPEAIKNFIPLLNPVSQDFVSLLHKRIKQQGSGKFVGDIKEDLFRFAFESITNVMFGERLGMLEDTVDTEAQKFIDAVYKMFHTSVPLLNLPPELYRLFRTKTWRDHVAAWDTIFNKAEKYTEIFYQDLRQKTEFRNYPGILYHLLKSEKMLLEDVKANITEMLAGGVDTTSMTLQWHLYEMARSLNVQEMLRKEVLNARRQAEGDISKMLQMVPLLKASIKETLRLHPISVTLQRYPESDLVLQDYLIPAKTLVQVAIYAMGRDPAFFSNPDKFDPTRWLGKDKDLIHFRNLGFGWGVRQCVGRRIAELEMTLFLIHILENFRVEMQQIGDVNTIFNLILTPDKPIFLVFRPFNQGPPQA</sequence>
<keyword id="KW-0153">Cholesterol metabolism</keyword>
<keyword id="KW-0903">Direct protein sequencing</keyword>
<keyword id="KW-0349">Heme</keyword>
<keyword id="KW-0408">Iron</keyword>
<keyword id="KW-0443">Lipid metabolism</keyword>
<keyword id="KW-0472">Membrane</keyword>
<keyword id="KW-0479">Metal-binding</keyword>
<keyword id="KW-0496">Mitochondrion</keyword>
<keyword id="KW-0999">Mitochondrion inner membrane</keyword>
<keyword id="KW-0503">Monooxygenase</keyword>
<keyword id="KW-0560">Oxidoreductase</keyword>
<keyword id="KW-1185">Reference proteome</keyword>
<keyword id="KW-0753">Steroid metabolism</keyword>
<keyword id="KW-0755">Steroidogenesis</keyword>
<keyword id="KW-1207">Sterol metabolism</keyword>
<keyword id="KW-0809">Transit peptide</keyword>
<name>CP11A_SHEEP</name>
<gene>
    <name evidence="6" type="primary">CYP11A1</name>
</gene>
<dbReference type="EC" id="1.14.15.6" evidence="1"/>
<dbReference type="EMBL" id="D50057">
    <property type="protein sequence ID" value="BAA08775.1"/>
    <property type="molecule type" value="mRNA"/>
</dbReference>
<dbReference type="RefSeq" id="NP_001087258.1">
    <property type="nucleotide sequence ID" value="NM_001093789.1"/>
</dbReference>
<dbReference type="SMR" id="P79202"/>
<dbReference type="STRING" id="9940.ENSOARP00000004130"/>
<dbReference type="PaxDb" id="9940-ENSOARP00000004130"/>
<dbReference type="GeneID" id="100048994"/>
<dbReference type="KEGG" id="oas:100048994"/>
<dbReference type="CTD" id="1583"/>
<dbReference type="eggNOG" id="KOG0159">
    <property type="taxonomic scope" value="Eukaryota"/>
</dbReference>
<dbReference type="OrthoDB" id="3945418at2759"/>
<dbReference type="UniPathway" id="UPA00229"/>
<dbReference type="UniPathway" id="UPA00296"/>
<dbReference type="Proteomes" id="UP000002356">
    <property type="component" value="Unplaced"/>
</dbReference>
<dbReference type="GO" id="GO:0005743">
    <property type="term" value="C:mitochondrial inner membrane"/>
    <property type="evidence" value="ECO:0000250"/>
    <property type="project" value="UniProtKB"/>
</dbReference>
<dbReference type="GO" id="GO:0008386">
    <property type="term" value="F:cholesterol monooxygenase (side-chain-cleaving) activity"/>
    <property type="evidence" value="ECO:0000250"/>
    <property type="project" value="UniProtKB"/>
</dbReference>
<dbReference type="GO" id="GO:0020037">
    <property type="term" value="F:heme binding"/>
    <property type="evidence" value="ECO:0000250"/>
    <property type="project" value="UniProtKB"/>
</dbReference>
<dbReference type="GO" id="GO:0005506">
    <property type="term" value="F:iron ion binding"/>
    <property type="evidence" value="ECO:0007669"/>
    <property type="project" value="InterPro"/>
</dbReference>
<dbReference type="GO" id="GO:0006700">
    <property type="term" value="P:C21-steroid hormone biosynthetic process"/>
    <property type="evidence" value="ECO:0000250"/>
    <property type="project" value="UniProtKB"/>
</dbReference>
<dbReference type="GO" id="GO:0071375">
    <property type="term" value="P:cellular response to peptide hormone stimulus"/>
    <property type="evidence" value="ECO:0007669"/>
    <property type="project" value="TreeGrafter"/>
</dbReference>
<dbReference type="GO" id="GO:0008203">
    <property type="term" value="P:cholesterol metabolic process"/>
    <property type="evidence" value="ECO:0000250"/>
    <property type="project" value="UniProtKB"/>
</dbReference>
<dbReference type="GO" id="GO:0034650">
    <property type="term" value="P:cortisol metabolic process"/>
    <property type="evidence" value="ECO:0007669"/>
    <property type="project" value="TreeGrafter"/>
</dbReference>
<dbReference type="GO" id="GO:0006704">
    <property type="term" value="P:glucocorticoid biosynthetic process"/>
    <property type="evidence" value="ECO:0007669"/>
    <property type="project" value="TreeGrafter"/>
</dbReference>
<dbReference type="FunFam" id="1.10.630.10:FF:000015">
    <property type="entry name" value="Cholesterol side-chain cleavage enzyme, mitochondrial"/>
    <property type="match status" value="1"/>
</dbReference>
<dbReference type="Gene3D" id="1.10.630.10">
    <property type="entry name" value="Cytochrome P450"/>
    <property type="match status" value="1"/>
</dbReference>
<dbReference type="InterPro" id="IPR050479">
    <property type="entry name" value="CYP11_CYP27_families"/>
</dbReference>
<dbReference type="InterPro" id="IPR001128">
    <property type="entry name" value="Cyt_P450"/>
</dbReference>
<dbReference type="InterPro" id="IPR017972">
    <property type="entry name" value="Cyt_P450_CS"/>
</dbReference>
<dbReference type="InterPro" id="IPR002401">
    <property type="entry name" value="Cyt_P450_E_grp-I"/>
</dbReference>
<dbReference type="InterPro" id="IPR036396">
    <property type="entry name" value="Cyt_P450_sf"/>
</dbReference>
<dbReference type="PANTHER" id="PTHR24279:SF3">
    <property type="entry name" value="CHOLESTEROL SIDE-CHAIN CLEAVAGE ENZYME, MITOCHONDRIAL"/>
    <property type="match status" value="1"/>
</dbReference>
<dbReference type="PANTHER" id="PTHR24279">
    <property type="entry name" value="CYTOCHROME P450"/>
    <property type="match status" value="1"/>
</dbReference>
<dbReference type="Pfam" id="PF00067">
    <property type="entry name" value="p450"/>
    <property type="match status" value="1"/>
</dbReference>
<dbReference type="PRINTS" id="PR00463">
    <property type="entry name" value="EP450I"/>
</dbReference>
<dbReference type="PRINTS" id="PR00385">
    <property type="entry name" value="P450"/>
</dbReference>
<dbReference type="SUPFAM" id="SSF48264">
    <property type="entry name" value="Cytochrome P450"/>
    <property type="match status" value="1"/>
</dbReference>
<dbReference type="PROSITE" id="PS00086">
    <property type="entry name" value="CYTOCHROME_P450"/>
    <property type="match status" value="1"/>
</dbReference>
<protein>
    <recommendedName>
        <fullName evidence="1">Cholesterol side-chain cleavage enzyme, mitochondrial</fullName>
        <ecNumber evidence="1">1.14.15.6</ecNumber>
    </recommendedName>
    <alternativeName>
        <fullName evidence="5">CYPXIA1</fullName>
    </alternativeName>
    <alternativeName>
        <fullName>Cholesterol desmolase</fullName>
    </alternativeName>
    <alternativeName>
        <fullName>Cytochrome P450 11A1</fullName>
    </alternativeName>
    <alternativeName>
        <fullName>Cytochrome P450(scc)</fullName>
    </alternativeName>
</protein>
<reference key="1">
    <citation type="journal article" date="1996" name="J. Steroid Biochem. Mol. Biol.">
        <title>Molecular cloning and nucleotide sequences of cDNA clones of sheep and goat adrenocortical cytochromes P450scc (CYP11A1).</title>
        <authorList>
            <person name="Okuyama E."/>
            <person name="Okazaki T."/>
            <person name="Furukawa A."/>
            <person name="Wu R.-F."/>
            <person name="Ichikawa Y."/>
        </authorList>
    </citation>
    <scope>NUCLEOTIDE SEQUENCE [MRNA]</scope>
    <source>
        <tissue>Adrenal cortex</tissue>
    </source>
</reference>
<reference key="2">
    <citation type="journal article" date="1994" name="Biochim. Biophys. Acta">
        <title>Purification and comparative characterization of cytochrome P-450scc (CYP XIA1) from sheep adrenocortical mitochondria.</title>
        <authorList>
            <person name="Miyatake A."/>
            <person name="Tsubaki M."/>
            <person name="Hori H."/>
            <person name="Ichikawa Y."/>
        </authorList>
    </citation>
    <scope>PROTEIN SEQUENCE OF 40-62</scope>
    <source>
        <tissue>Adrenal cortex</tissue>
    </source>
</reference>